<comment type="function">
    <text>Crystallins are the dominant structural components of the vertebrate eye lens.</text>
</comment>
<comment type="subunit">
    <text evidence="1">Monomer.</text>
</comment>
<comment type="domain">
    <text>Has a two-domain beta-structure, folded into four very similar Greek key motifs.</text>
</comment>
<comment type="similarity">
    <text evidence="3">Belongs to the beta/gamma-crystallin family.</text>
</comment>
<organism>
    <name type="scientific">Cyprinus carpio</name>
    <name type="common">Common carp</name>
    <dbReference type="NCBI Taxonomy" id="7962"/>
    <lineage>
        <taxon>Eukaryota</taxon>
        <taxon>Metazoa</taxon>
        <taxon>Chordata</taxon>
        <taxon>Craniata</taxon>
        <taxon>Vertebrata</taxon>
        <taxon>Euteleostomi</taxon>
        <taxon>Actinopterygii</taxon>
        <taxon>Neopterygii</taxon>
        <taxon>Teleostei</taxon>
        <taxon>Ostariophysi</taxon>
        <taxon>Cypriniformes</taxon>
        <taxon>Cyprinidae</taxon>
        <taxon>Cyprininae</taxon>
        <taxon>Cyprinus</taxon>
    </lineage>
</organism>
<keyword id="KW-0273">Eye lens protein</keyword>
<keyword id="KW-1185">Reference proteome</keyword>
<keyword id="KW-0677">Repeat</keyword>
<dbReference type="EMBL" id="X55945">
    <property type="protein sequence ID" value="CAA39413.1"/>
    <property type="molecule type" value="Genomic_DNA"/>
</dbReference>
<dbReference type="EMBL" id="X12902">
    <property type="protein sequence ID" value="CAA31387.1"/>
    <property type="molecule type" value="mRNA"/>
</dbReference>
<dbReference type="PIR" id="JS0061">
    <property type="entry name" value="CYCAG1"/>
</dbReference>
<dbReference type="PIR" id="S18459">
    <property type="entry name" value="S18459"/>
</dbReference>
<dbReference type="SMR" id="P10043"/>
<dbReference type="Proteomes" id="UP000694384">
    <property type="component" value="Unplaced"/>
</dbReference>
<dbReference type="Proteomes" id="UP000694427">
    <property type="component" value="Unplaced"/>
</dbReference>
<dbReference type="Proteomes" id="UP000694700">
    <property type="component" value="Unplaced"/>
</dbReference>
<dbReference type="Proteomes" id="UP000694701">
    <property type="component" value="Unplaced"/>
</dbReference>
<dbReference type="Proteomes" id="UP001155660">
    <property type="component" value="Unplaced"/>
</dbReference>
<dbReference type="GO" id="GO:0005212">
    <property type="term" value="F:structural constituent of eye lens"/>
    <property type="evidence" value="ECO:0007669"/>
    <property type="project" value="UniProtKB-KW"/>
</dbReference>
<dbReference type="GO" id="GO:0002088">
    <property type="term" value="P:lens development in camera-type eye"/>
    <property type="evidence" value="ECO:0007669"/>
    <property type="project" value="TreeGrafter"/>
</dbReference>
<dbReference type="GO" id="GO:0007601">
    <property type="term" value="P:visual perception"/>
    <property type="evidence" value="ECO:0007669"/>
    <property type="project" value="TreeGrafter"/>
</dbReference>
<dbReference type="FunFam" id="2.60.20.10:FF:000001">
    <property type="entry name" value="Crystallin gamma S"/>
    <property type="match status" value="1"/>
</dbReference>
<dbReference type="FunFam" id="2.60.20.10:FF:000003">
    <property type="entry name" value="Crystallin gamma S"/>
    <property type="match status" value="1"/>
</dbReference>
<dbReference type="Gene3D" id="2.60.20.10">
    <property type="entry name" value="Crystallins"/>
    <property type="match status" value="2"/>
</dbReference>
<dbReference type="InterPro" id="IPR050252">
    <property type="entry name" value="Beta/Gamma-Crystallin"/>
</dbReference>
<dbReference type="InterPro" id="IPR001064">
    <property type="entry name" value="Beta/gamma_crystallin"/>
</dbReference>
<dbReference type="InterPro" id="IPR011024">
    <property type="entry name" value="G_crystallin-like"/>
</dbReference>
<dbReference type="PANTHER" id="PTHR11818">
    <property type="entry name" value="BETA/GAMMA CRYSTALLIN"/>
    <property type="match status" value="1"/>
</dbReference>
<dbReference type="PANTHER" id="PTHR11818:SF139">
    <property type="entry name" value="CRYSTALLIN, GAMMA M1-RELATED"/>
    <property type="match status" value="1"/>
</dbReference>
<dbReference type="Pfam" id="PF00030">
    <property type="entry name" value="Crystall"/>
    <property type="match status" value="2"/>
</dbReference>
<dbReference type="PRINTS" id="PR01367">
    <property type="entry name" value="BGCRYSTALLIN"/>
</dbReference>
<dbReference type="SMART" id="SM00247">
    <property type="entry name" value="XTALbg"/>
    <property type="match status" value="2"/>
</dbReference>
<dbReference type="SUPFAM" id="SSF49695">
    <property type="entry name" value="gamma-Crystallin-like"/>
    <property type="match status" value="1"/>
</dbReference>
<dbReference type="PROSITE" id="PS50915">
    <property type="entry name" value="CRYSTALLIN_BETA_GAMMA"/>
    <property type="match status" value="4"/>
</dbReference>
<sequence>MGKIIFYDDRNFQGRSYDCMSDCSDISSYLSRVGSIRVESGCFMVYERNSYMGNQFFLRRGEYHDMQRMMSMGMIFDTIRSCRMIPPYRGSYRMRIYERDNFGGQMHEVMDDCDNIMERYRMSDWQSCHVMDGHWLFYEQPHYRGRMWYFRPGEYRSFRDMGYSNMRFMSMRRITDIC</sequence>
<feature type="initiator methionine" description="Removed">
    <location>
        <position position="1"/>
    </location>
</feature>
<feature type="chain" id="PRO_0000057574" description="Gamma-crystallin M1">
    <location>
        <begin position="2"/>
        <end position="178"/>
    </location>
</feature>
<feature type="domain" description="Beta/gamma crystallin 'Greek key' 1" evidence="2">
    <location>
        <begin position="2"/>
        <end position="40"/>
    </location>
</feature>
<feature type="domain" description="Beta/gamma crystallin 'Greek key' 2" evidence="2">
    <location>
        <begin position="41"/>
        <end position="86"/>
    </location>
</feature>
<feature type="domain" description="Beta/gamma crystallin 'Greek key' 3" evidence="2">
    <location>
        <begin position="92"/>
        <end position="132"/>
    </location>
</feature>
<feature type="domain" description="Beta/gamma crystallin 'Greek key' 4" evidence="2">
    <location>
        <begin position="133"/>
        <end position="175"/>
    </location>
</feature>
<feature type="region of interest" description="Connecting peptide">
    <location>
        <begin position="87"/>
        <end position="91"/>
    </location>
</feature>
<feature type="sequence conflict" description="In Ref. 2; CAA31387." evidence="3" ref="2">
    <original>D</original>
    <variation>E</variation>
    <location>
        <position position="8"/>
    </location>
</feature>
<feature type="sequence conflict" description="In Ref. 2; CAA31387." evidence="3" ref="2">
    <original>I</original>
    <variation>M</variation>
    <location>
        <position position="75"/>
    </location>
</feature>
<feature type="sequence conflict" description="In Ref. 2; CAA31387." evidence="3" ref="2">
    <original>N</original>
    <variation>T</variation>
    <location>
        <position position="101"/>
    </location>
</feature>
<feature type="sequence conflict" description="In Ref. 2; CAA31387." evidence="3" ref="2">
    <original>I</original>
    <variation>M</variation>
    <location>
        <position position="177"/>
    </location>
</feature>
<protein>
    <recommendedName>
        <fullName>Gamma-crystallin M1</fullName>
        <shortName>Gamma-M1</shortName>
    </recommendedName>
</protein>
<reference key="1">
    <citation type="journal article" date="1991" name="Biochim. Biophys. Acta">
        <title>Gamma-crystallin genes in carp: cloning and characterization.</title>
        <authorList>
            <person name="Chang T."/>
            <person name="Lin C.L."/>
            <person name="Chang W.C."/>
            <person name="Chen P.H."/>
        </authorList>
    </citation>
    <scope>NUCLEOTIDE SEQUENCE [GENOMIC DNA]</scope>
    <source>
        <tissue>Lens</tissue>
    </source>
</reference>
<reference key="2">
    <citation type="journal article" date="1988" name="Biochim. Biophys. Acta">
        <title>Carp gamma-crystallins with high methionine content: cloning and sequencing of the complementary DNA.</title>
        <authorList>
            <person name="Chang T."/>
            <person name="Jiang Y.-J."/>
            <person name="Chiou S.-H."/>
            <person name="Chang W.-C."/>
        </authorList>
    </citation>
    <scope>NUCLEOTIDE SEQUENCE [MRNA]</scope>
    <source>
        <tissue>Lens</tissue>
    </source>
</reference>
<accession>P10043</accession>
<proteinExistence type="evidence at transcript level"/>
<evidence type="ECO:0000250" key="1"/>
<evidence type="ECO:0000255" key="2">
    <source>
        <dbReference type="PROSITE-ProRule" id="PRU00028"/>
    </source>
</evidence>
<evidence type="ECO:0000305" key="3"/>
<name>CRGM1_CYPCA</name>